<feature type="chain" id="PRO_1000059597" description="Chaperone protein DnaK">
    <location>
        <begin position="1"/>
        <end position="641"/>
    </location>
</feature>
<feature type="region of interest" description="Disordered" evidence="2">
    <location>
        <begin position="602"/>
        <end position="641"/>
    </location>
</feature>
<feature type="compositionally biased region" description="Low complexity" evidence="2">
    <location>
        <begin position="604"/>
        <end position="615"/>
    </location>
</feature>
<feature type="compositionally biased region" description="Acidic residues" evidence="2">
    <location>
        <begin position="626"/>
        <end position="641"/>
    </location>
</feature>
<feature type="modified residue" description="Phosphothreonine; by autocatalysis" evidence="1">
    <location>
        <position position="199"/>
    </location>
</feature>
<organism>
    <name type="scientific">Marinobacter nauticus (strain ATCC 700491 / DSM 11845 / VT8)</name>
    <name type="common">Marinobacter aquaeolei</name>
    <dbReference type="NCBI Taxonomy" id="351348"/>
    <lineage>
        <taxon>Bacteria</taxon>
        <taxon>Pseudomonadati</taxon>
        <taxon>Pseudomonadota</taxon>
        <taxon>Gammaproteobacteria</taxon>
        <taxon>Pseudomonadales</taxon>
        <taxon>Marinobacteraceae</taxon>
        <taxon>Marinobacter</taxon>
    </lineage>
</organism>
<comment type="function">
    <text evidence="1">Acts as a chaperone.</text>
</comment>
<comment type="induction">
    <text evidence="1">By stress conditions e.g. heat shock.</text>
</comment>
<comment type="similarity">
    <text evidence="1">Belongs to the heat shock protein 70 family.</text>
</comment>
<evidence type="ECO:0000255" key="1">
    <source>
        <dbReference type="HAMAP-Rule" id="MF_00332"/>
    </source>
</evidence>
<evidence type="ECO:0000256" key="2">
    <source>
        <dbReference type="SAM" id="MobiDB-lite"/>
    </source>
</evidence>
<sequence length="641" mass="69369">MSKIIGIDLGTTNSCVAIMDGDKVKVIENAEGDRTTPSIIAYTDDNETLVGQSAKRQAVTNPHNTLYAIKRLIGRRFEDDVVQKDIKMVPYKIAKADNGDAWVEVKGQKMAPPQVSAEVLKKMKKTAEDYLGEKVTEAVITVPAYFNDSQRQATKDAGKIAGLEVKRIINEPTAAALAYGLDKKSGDRTVAVYDLGGGTFDLSIIEIADVDGEHQFEVLATNGDTFLGGEDFDLKVIEYLADQFKKDSGIDLRGDSLAMQRLKEAAEKAKIELSSSQQTDVNLPYITADASGPKHMNVKLTRAKLESLVEDLVQRSLEPCKVALQDAGMKAGEIDEVILVGGQTRMPLVQEKVKEFFGKEPRKDVNPDEAVAMGAAIQGAVLSGDVKDVLLLDVTPLTLGIETMGGVATPLIEKNTTIPTKKSQIFSTADDNQTAVTIHVVQGERKQAAQNKSLGRFDLADIPPAPRGVPQIEVTFDIDANGILNVSAKDKATGKEQSIVIKASSGLNDDEIEKMVRDAEANAEEDRKFEELVQARNQGDAMVHAVRKTLSEAGDKVSDSEKESIEAAIKDLEEALEGSDKEAIEAKTQKLTEVSSELAQKMYADQADQAQQAGGQEEGQAKSADDAVDAEFEEVKDDDKK</sequence>
<keyword id="KW-0067">ATP-binding</keyword>
<keyword id="KW-0143">Chaperone</keyword>
<keyword id="KW-0547">Nucleotide-binding</keyword>
<keyword id="KW-0597">Phosphoprotein</keyword>
<keyword id="KW-0346">Stress response</keyword>
<gene>
    <name evidence="1" type="primary">dnaK</name>
    <name type="ordered locus">Maqu_3362</name>
</gene>
<protein>
    <recommendedName>
        <fullName evidence="1">Chaperone protein DnaK</fullName>
    </recommendedName>
    <alternativeName>
        <fullName evidence="1">HSP70</fullName>
    </alternativeName>
    <alternativeName>
        <fullName evidence="1">Heat shock 70 kDa protein</fullName>
    </alternativeName>
    <alternativeName>
        <fullName evidence="1">Heat shock protein 70</fullName>
    </alternativeName>
</protein>
<name>DNAK_MARN8</name>
<accession>A1U614</accession>
<dbReference type="EMBL" id="CP000514">
    <property type="protein sequence ID" value="ABM20433.1"/>
    <property type="molecule type" value="Genomic_DNA"/>
</dbReference>
<dbReference type="RefSeq" id="WP_011786774.1">
    <property type="nucleotide sequence ID" value="NC_008740.1"/>
</dbReference>
<dbReference type="SMR" id="A1U614"/>
<dbReference type="STRING" id="351348.Maqu_3362"/>
<dbReference type="KEGG" id="maq:Maqu_3362"/>
<dbReference type="eggNOG" id="COG0443">
    <property type="taxonomic scope" value="Bacteria"/>
</dbReference>
<dbReference type="HOGENOM" id="CLU_005965_2_1_6"/>
<dbReference type="OrthoDB" id="9766019at2"/>
<dbReference type="Proteomes" id="UP000000998">
    <property type="component" value="Chromosome"/>
</dbReference>
<dbReference type="GO" id="GO:0005524">
    <property type="term" value="F:ATP binding"/>
    <property type="evidence" value="ECO:0007669"/>
    <property type="project" value="UniProtKB-UniRule"/>
</dbReference>
<dbReference type="GO" id="GO:0140662">
    <property type="term" value="F:ATP-dependent protein folding chaperone"/>
    <property type="evidence" value="ECO:0007669"/>
    <property type="project" value="InterPro"/>
</dbReference>
<dbReference type="GO" id="GO:0051082">
    <property type="term" value="F:unfolded protein binding"/>
    <property type="evidence" value="ECO:0007669"/>
    <property type="project" value="InterPro"/>
</dbReference>
<dbReference type="CDD" id="cd10234">
    <property type="entry name" value="ASKHA_NBD_HSP70_DnaK-like"/>
    <property type="match status" value="1"/>
</dbReference>
<dbReference type="FunFam" id="2.60.34.10:FF:000014">
    <property type="entry name" value="Chaperone protein DnaK HSP70"/>
    <property type="match status" value="1"/>
</dbReference>
<dbReference type="FunFam" id="1.20.1270.10:FF:000001">
    <property type="entry name" value="Molecular chaperone DnaK"/>
    <property type="match status" value="1"/>
</dbReference>
<dbReference type="FunFam" id="3.30.420.40:FF:000004">
    <property type="entry name" value="Molecular chaperone DnaK"/>
    <property type="match status" value="1"/>
</dbReference>
<dbReference type="FunFam" id="3.90.640.10:FF:000003">
    <property type="entry name" value="Molecular chaperone DnaK"/>
    <property type="match status" value="1"/>
</dbReference>
<dbReference type="Gene3D" id="1.20.1270.10">
    <property type="match status" value="1"/>
</dbReference>
<dbReference type="Gene3D" id="3.30.420.40">
    <property type="match status" value="2"/>
</dbReference>
<dbReference type="Gene3D" id="3.90.640.10">
    <property type="entry name" value="Actin, Chain A, domain 4"/>
    <property type="match status" value="1"/>
</dbReference>
<dbReference type="Gene3D" id="2.60.34.10">
    <property type="entry name" value="Substrate Binding Domain Of DNAk, Chain A, domain 1"/>
    <property type="match status" value="1"/>
</dbReference>
<dbReference type="HAMAP" id="MF_00332">
    <property type="entry name" value="DnaK"/>
    <property type="match status" value="1"/>
</dbReference>
<dbReference type="InterPro" id="IPR043129">
    <property type="entry name" value="ATPase_NBD"/>
</dbReference>
<dbReference type="InterPro" id="IPR012725">
    <property type="entry name" value="Chaperone_DnaK"/>
</dbReference>
<dbReference type="InterPro" id="IPR018181">
    <property type="entry name" value="Heat_shock_70_CS"/>
</dbReference>
<dbReference type="InterPro" id="IPR029048">
    <property type="entry name" value="HSP70_C_sf"/>
</dbReference>
<dbReference type="InterPro" id="IPR029047">
    <property type="entry name" value="HSP70_peptide-bd_sf"/>
</dbReference>
<dbReference type="InterPro" id="IPR013126">
    <property type="entry name" value="Hsp_70_fam"/>
</dbReference>
<dbReference type="NCBIfam" id="NF001413">
    <property type="entry name" value="PRK00290.1"/>
    <property type="match status" value="1"/>
</dbReference>
<dbReference type="NCBIfam" id="NF003520">
    <property type="entry name" value="PRK05183.1"/>
    <property type="match status" value="1"/>
</dbReference>
<dbReference type="NCBIfam" id="TIGR02350">
    <property type="entry name" value="prok_dnaK"/>
    <property type="match status" value="1"/>
</dbReference>
<dbReference type="PANTHER" id="PTHR19375">
    <property type="entry name" value="HEAT SHOCK PROTEIN 70KDA"/>
    <property type="match status" value="1"/>
</dbReference>
<dbReference type="Pfam" id="PF00012">
    <property type="entry name" value="HSP70"/>
    <property type="match status" value="1"/>
</dbReference>
<dbReference type="PRINTS" id="PR00301">
    <property type="entry name" value="HEATSHOCK70"/>
</dbReference>
<dbReference type="SUPFAM" id="SSF53067">
    <property type="entry name" value="Actin-like ATPase domain"/>
    <property type="match status" value="2"/>
</dbReference>
<dbReference type="SUPFAM" id="SSF100934">
    <property type="entry name" value="Heat shock protein 70kD (HSP70), C-terminal subdomain"/>
    <property type="match status" value="1"/>
</dbReference>
<dbReference type="SUPFAM" id="SSF100920">
    <property type="entry name" value="Heat shock protein 70kD (HSP70), peptide-binding domain"/>
    <property type="match status" value="1"/>
</dbReference>
<dbReference type="PROSITE" id="PS00297">
    <property type="entry name" value="HSP70_1"/>
    <property type="match status" value="1"/>
</dbReference>
<dbReference type="PROSITE" id="PS00329">
    <property type="entry name" value="HSP70_2"/>
    <property type="match status" value="1"/>
</dbReference>
<dbReference type="PROSITE" id="PS01036">
    <property type="entry name" value="HSP70_3"/>
    <property type="match status" value="1"/>
</dbReference>
<reference key="1">
    <citation type="journal article" date="2011" name="Appl. Environ. Microbiol.">
        <title>Genomic potential of Marinobacter aquaeolei, a biogeochemical 'opportunitroph'.</title>
        <authorList>
            <person name="Singer E."/>
            <person name="Webb E.A."/>
            <person name="Nelson W.C."/>
            <person name="Heidelberg J.F."/>
            <person name="Ivanova N."/>
            <person name="Pati A."/>
            <person name="Edwards K.J."/>
        </authorList>
    </citation>
    <scope>NUCLEOTIDE SEQUENCE [LARGE SCALE GENOMIC DNA]</scope>
    <source>
        <strain>ATCC 700491 / DSM 11845 / VT8</strain>
    </source>
</reference>
<proteinExistence type="inferred from homology"/>